<feature type="chain" id="PRO_0000443117" description="Hemoglobin subunit beta-2" evidence="3">
    <location>
        <begin position="1"/>
        <end position="135"/>
    </location>
</feature>
<feature type="domain" description="Globin" evidence="2">
    <location>
        <begin position="2"/>
        <end position="135"/>
    </location>
</feature>
<feature type="binding site" description="distal binding residue" evidence="1">
    <location>
        <position position="57"/>
    </location>
    <ligand>
        <name>heme b</name>
        <dbReference type="ChEBI" id="CHEBI:60344"/>
    </ligand>
    <ligandPart>
        <name>Fe</name>
        <dbReference type="ChEBI" id="CHEBI:18248"/>
    </ligandPart>
</feature>
<feature type="binding site" description="proximal binding residue" evidence="1">
    <location>
        <position position="81"/>
    </location>
    <ligand>
        <name>heme b</name>
        <dbReference type="ChEBI" id="CHEBI:60344"/>
    </ligand>
    <ligandPart>
        <name>Fe</name>
        <dbReference type="ChEBI" id="CHEBI:18248"/>
    </ligandPart>
</feature>
<feature type="non-consecutive residues" evidence="4">
    <location>
        <begin position="48"/>
        <end position="49"/>
    </location>
</feature>
<feature type="non-consecutive residues" evidence="4">
    <location>
        <begin position="79"/>
        <end position="80"/>
    </location>
</feature>
<evidence type="ECO:0000250" key="1">
    <source>
        <dbReference type="UniProtKB" id="P02070"/>
    </source>
</evidence>
<evidence type="ECO:0000255" key="2">
    <source>
        <dbReference type="PROSITE-ProRule" id="PRU00238"/>
    </source>
</evidence>
<evidence type="ECO:0000269" key="3">
    <source>
    </source>
</evidence>
<evidence type="ECO:0000303" key="4">
    <source>
    </source>
</evidence>
<evidence type="ECO:0000305" key="5"/>
<evidence type="ECO:0000305" key="6">
    <source>
    </source>
</evidence>
<organism evidence="4">
    <name type="scientific">Somniosus microcephalus</name>
    <name type="common">Greenland sleeper shark</name>
    <name type="synonym">Squalus microcephalus</name>
    <dbReference type="NCBI Taxonomy" id="191813"/>
    <lineage>
        <taxon>Eukaryota</taxon>
        <taxon>Metazoa</taxon>
        <taxon>Chordata</taxon>
        <taxon>Craniata</taxon>
        <taxon>Vertebrata</taxon>
        <taxon>Chondrichthyes</taxon>
        <taxon>Elasmobranchii</taxon>
        <taxon>Squalomorphii</taxon>
        <taxon>Squaliformes</taxon>
        <taxon>Somniosidae</taxon>
        <taxon>Somniosus</taxon>
    </lineage>
</organism>
<accession>C0HJZ4</accession>
<proteinExistence type="evidence at protein level"/>
<name>HBB2_SOMMI</name>
<reference evidence="5" key="1">
    <citation type="journal article" date="2017" name="PLoS ONE">
        <title>The Greenland shark Somniosus microcephalus-Hemoglobins and ligand-binding properties.</title>
        <authorList>
            <person name="Russo R."/>
            <person name="Giordano D."/>
            <person name="Paredi G."/>
            <person name="Marchesani F."/>
            <person name="Milazzo L."/>
            <person name="Altomonte G."/>
            <person name="Del Canale P."/>
            <person name="Abbruzzetti S."/>
            <person name="Ascenzi P."/>
            <person name="di Prisco G."/>
            <person name="Viappiani C."/>
            <person name="Fago A."/>
            <person name="Bruno S."/>
            <person name="Smulevich G."/>
            <person name="Verde C."/>
        </authorList>
    </citation>
    <scope>PROTEIN SEQUENCE</scope>
    <scope>FUNCTION</scope>
    <scope>SUBUNIT</scope>
    <scope>TISSUE SPECIFICITY</scope>
    <scope>IDENTIFICATION BY MASS SPECTROMETRY</scope>
    <source>
        <tissue evidence="4">Erythrocyte</tissue>
    </source>
</reference>
<sequence>VHWTAEEKALVNVVWSKTDHQAVVANALGRLFVVYPWTKTYFTKFNGKAGDSAVQTHAGKVVSALTLAYNHIDDVKPHFKHYEGFHVDPENFRLLANCLNVELGHTLHKEFTPELHAAWNKFSNVVVDALSKGYH</sequence>
<gene>
    <name evidence="6" type="primary">HBB2</name>
</gene>
<dbReference type="SMR" id="C0HJZ4"/>
<dbReference type="GO" id="GO:0072562">
    <property type="term" value="C:blood microparticle"/>
    <property type="evidence" value="ECO:0007669"/>
    <property type="project" value="TreeGrafter"/>
</dbReference>
<dbReference type="GO" id="GO:0031838">
    <property type="term" value="C:haptoglobin-hemoglobin complex"/>
    <property type="evidence" value="ECO:0007669"/>
    <property type="project" value="TreeGrafter"/>
</dbReference>
<dbReference type="GO" id="GO:0005833">
    <property type="term" value="C:hemoglobin complex"/>
    <property type="evidence" value="ECO:0007669"/>
    <property type="project" value="TreeGrafter"/>
</dbReference>
<dbReference type="GO" id="GO:0031720">
    <property type="term" value="F:haptoglobin binding"/>
    <property type="evidence" value="ECO:0007669"/>
    <property type="project" value="TreeGrafter"/>
</dbReference>
<dbReference type="GO" id="GO:0020037">
    <property type="term" value="F:heme binding"/>
    <property type="evidence" value="ECO:0007669"/>
    <property type="project" value="InterPro"/>
</dbReference>
<dbReference type="GO" id="GO:0046872">
    <property type="term" value="F:metal ion binding"/>
    <property type="evidence" value="ECO:0007669"/>
    <property type="project" value="UniProtKB-KW"/>
</dbReference>
<dbReference type="GO" id="GO:0043177">
    <property type="term" value="F:organic acid binding"/>
    <property type="evidence" value="ECO:0007669"/>
    <property type="project" value="TreeGrafter"/>
</dbReference>
<dbReference type="GO" id="GO:0019825">
    <property type="term" value="F:oxygen binding"/>
    <property type="evidence" value="ECO:0007669"/>
    <property type="project" value="InterPro"/>
</dbReference>
<dbReference type="GO" id="GO:0005344">
    <property type="term" value="F:oxygen carrier activity"/>
    <property type="evidence" value="ECO:0007669"/>
    <property type="project" value="UniProtKB-KW"/>
</dbReference>
<dbReference type="GO" id="GO:0004601">
    <property type="term" value="F:peroxidase activity"/>
    <property type="evidence" value="ECO:0007669"/>
    <property type="project" value="TreeGrafter"/>
</dbReference>
<dbReference type="GO" id="GO:0042744">
    <property type="term" value="P:hydrogen peroxide catabolic process"/>
    <property type="evidence" value="ECO:0007669"/>
    <property type="project" value="TreeGrafter"/>
</dbReference>
<dbReference type="Gene3D" id="1.10.490.10">
    <property type="entry name" value="Globins"/>
    <property type="match status" value="1"/>
</dbReference>
<dbReference type="InterPro" id="IPR000971">
    <property type="entry name" value="Globin"/>
</dbReference>
<dbReference type="InterPro" id="IPR009050">
    <property type="entry name" value="Globin-like_sf"/>
</dbReference>
<dbReference type="InterPro" id="IPR012292">
    <property type="entry name" value="Globin/Proto"/>
</dbReference>
<dbReference type="InterPro" id="IPR050056">
    <property type="entry name" value="Hemoglobin_oxygen_transport"/>
</dbReference>
<dbReference type="PANTHER" id="PTHR11442">
    <property type="entry name" value="HEMOGLOBIN FAMILY MEMBER"/>
    <property type="match status" value="1"/>
</dbReference>
<dbReference type="PANTHER" id="PTHR11442:SF100">
    <property type="entry name" value="HEMOGLOBIN SUBUNIT BETA-1"/>
    <property type="match status" value="1"/>
</dbReference>
<dbReference type="Pfam" id="PF00042">
    <property type="entry name" value="Globin"/>
    <property type="match status" value="1"/>
</dbReference>
<dbReference type="SUPFAM" id="SSF46458">
    <property type="entry name" value="Globin-like"/>
    <property type="match status" value="1"/>
</dbReference>
<dbReference type="PROSITE" id="PS01033">
    <property type="entry name" value="GLOBIN"/>
    <property type="match status" value="1"/>
</dbReference>
<protein>
    <recommendedName>
        <fullName evidence="6">Hemoglobin subunit beta-2</fullName>
    </recommendedName>
    <alternativeName>
        <fullName evidence="6">Beta-2-globin</fullName>
    </alternativeName>
    <alternativeName>
        <fullName evidence="4">Hemoglobin beta-2 chain</fullName>
    </alternativeName>
</protein>
<comment type="function">
    <text evidence="3">Involved in oxygen transport from gills to the various peripheral tissues.</text>
</comment>
<comment type="subunit">
    <text evidence="3">Hb 2 is a heterotetramer of two alpha and two beta-2 chains.</text>
</comment>
<comment type="tissue specificity">
    <text evidence="3">Red blood cells (at protein level).</text>
</comment>
<comment type="miscellaneous">
    <text evidence="3">This fish has three hemoglobins: Hb 1, Hb 2 and Hb 3. They all have a similar Bohr effect.</text>
</comment>
<comment type="similarity">
    <text evidence="2">Belongs to the globin family.</text>
</comment>
<keyword id="KW-0903">Direct protein sequencing</keyword>
<keyword id="KW-0349">Heme</keyword>
<keyword id="KW-0408">Iron</keyword>
<keyword id="KW-0479">Metal-binding</keyword>
<keyword id="KW-0561">Oxygen transport</keyword>
<keyword id="KW-0813">Transport</keyword>